<sequence length="320" mass="35402">MRSAQVYRWQIPMDAGVVLRDRRLKTRDGLYVCLRDGEREGWGEISPLPGFSQETWEEAQTALLTWVNDWLQGNEGLPEMPSVAFGASCALAELTGILPEAADYRAAPLCTGDPDDLVLRLADMPGEKIAKVKVGLYEAVRDGMVVNLLLEAIPDLHLRLDANRAWTPLKAQQFAKYVNPDYRARIAFLEEPCKTRDDSRAFARETGIAIAWDESLREADFTFEAEEGVRAVVIKPTLTGSLDKVREQVAAAHALGLTAVISSSIESSLGLTQLARIAAWLTPGTLPGLDTLHLMQAQQIRPWPGSALPCLKREELERLL</sequence>
<comment type="function">
    <text evidence="1">Converts 2-succinyl-6-hydroxy-2,4-cyclohexadiene-1-carboxylate (SHCHC) to 2-succinylbenzoate (OSB).</text>
</comment>
<comment type="catalytic activity">
    <reaction evidence="1">
        <text>(1R,6R)-6-hydroxy-2-succinyl-cyclohexa-2,4-diene-1-carboxylate = 2-succinylbenzoate + H2O</text>
        <dbReference type="Rhea" id="RHEA:10196"/>
        <dbReference type="ChEBI" id="CHEBI:15377"/>
        <dbReference type="ChEBI" id="CHEBI:18325"/>
        <dbReference type="ChEBI" id="CHEBI:58689"/>
        <dbReference type="EC" id="4.2.1.113"/>
    </reaction>
</comment>
<comment type="cofactor">
    <cofactor evidence="1">
        <name>a divalent metal cation</name>
        <dbReference type="ChEBI" id="CHEBI:60240"/>
    </cofactor>
</comment>
<comment type="pathway">
    <text evidence="1">Quinol/quinone metabolism; 1,4-dihydroxy-2-naphthoate biosynthesis; 1,4-dihydroxy-2-naphthoate from chorismate: step 4/7.</text>
</comment>
<comment type="pathway">
    <text evidence="1">Quinol/quinone metabolism; menaquinone biosynthesis.</text>
</comment>
<comment type="similarity">
    <text evidence="1">Belongs to the mandelate racemase/muconate lactonizing enzyme family. MenC type 1 subfamily.</text>
</comment>
<keyword id="KW-0456">Lyase</keyword>
<keyword id="KW-0460">Magnesium</keyword>
<keyword id="KW-0474">Menaquinone biosynthesis</keyword>
<keyword id="KW-0479">Metal-binding</keyword>
<name>MENC_SALNS</name>
<evidence type="ECO:0000255" key="1">
    <source>
        <dbReference type="HAMAP-Rule" id="MF_00470"/>
    </source>
</evidence>
<dbReference type="EC" id="4.2.1.113" evidence="1"/>
<dbReference type="EMBL" id="CP001113">
    <property type="protein sequence ID" value="ACF63348.1"/>
    <property type="molecule type" value="Genomic_DNA"/>
</dbReference>
<dbReference type="RefSeq" id="WP_001255552.1">
    <property type="nucleotide sequence ID" value="NZ_CCMR01000001.1"/>
</dbReference>
<dbReference type="SMR" id="B4SYX8"/>
<dbReference type="KEGG" id="see:SNSL254_A2491"/>
<dbReference type="HOGENOM" id="CLU_030273_0_1_6"/>
<dbReference type="UniPathway" id="UPA00079"/>
<dbReference type="UniPathway" id="UPA01057">
    <property type="reaction ID" value="UER00165"/>
</dbReference>
<dbReference type="Proteomes" id="UP000008824">
    <property type="component" value="Chromosome"/>
</dbReference>
<dbReference type="GO" id="GO:0000287">
    <property type="term" value="F:magnesium ion binding"/>
    <property type="evidence" value="ECO:0007669"/>
    <property type="project" value="UniProtKB-UniRule"/>
</dbReference>
<dbReference type="GO" id="GO:0043748">
    <property type="term" value="F:O-succinylbenzoate synthase activity"/>
    <property type="evidence" value="ECO:0007669"/>
    <property type="project" value="UniProtKB-EC"/>
</dbReference>
<dbReference type="GO" id="GO:0009234">
    <property type="term" value="P:menaquinone biosynthetic process"/>
    <property type="evidence" value="ECO:0007669"/>
    <property type="project" value="UniProtKB-UniRule"/>
</dbReference>
<dbReference type="CDD" id="cd03320">
    <property type="entry name" value="OSBS"/>
    <property type="match status" value="1"/>
</dbReference>
<dbReference type="FunFam" id="3.20.20.120:FF:000006">
    <property type="entry name" value="o-succinylbenzoate synthase"/>
    <property type="match status" value="1"/>
</dbReference>
<dbReference type="Gene3D" id="3.20.20.120">
    <property type="entry name" value="Enolase-like C-terminal domain"/>
    <property type="match status" value="1"/>
</dbReference>
<dbReference type="Gene3D" id="3.30.390.10">
    <property type="entry name" value="Enolase-like, N-terminal domain"/>
    <property type="match status" value="1"/>
</dbReference>
<dbReference type="HAMAP" id="MF_00470">
    <property type="entry name" value="MenC_1"/>
    <property type="match status" value="1"/>
</dbReference>
<dbReference type="InterPro" id="IPR036849">
    <property type="entry name" value="Enolase-like_C_sf"/>
</dbReference>
<dbReference type="InterPro" id="IPR029017">
    <property type="entry name" value="Enolase-like_N"/>
</dbReference>
<dbReference type="InterPro" id="IPR029065">
    <property type="entry name" value="Enolase_C-like"/>
</dbReference>
<dbReference type="InterPro" id="IPR013342">
    <property type="entry name" value="Mandelate_racemase_C"/>
</dbReference>
<dbReference type="InterPro" id="IPR010196">
    <property type="entry name" value="OSB_synthase_MenC1"/>
</dbReference>
<dbReference type="InterPro" id="IPR041338">
    <property type="entry name" value="OSBS_N"/>
</dbReference>
<dbReference type="NCBIfam" id="TIGR01927">
    <property type="entry name" value="menC_gam_Gplu"/>
    <property type="match status" value="1"/>
</dbReference>
<dbReference type="NCBIfam" id="NF003473">
    <property type="entry name" value="PRK05105.1"/>
    <property type="match status" value="1"/>
</dbReference>
<dbReference type="PANTHER" id="PTHR48073:SF2">
    <property type="entry name" value="O-SUCCINYLBENZOATE SYNTHASE"/>
    <property type="match status" value="1"/>
</dbReference>
<dbReference type="PANTHER" id="PTHR48073">
    <property type="entry name" value="O-SUCCINYLBENZOATE SYNTHASE-RELATED"/>
    <property type="match status" value="1"/>
</dbReference>
<dbReference type="Pfam" id="PF21508">
    <property type="entry name" value="MenC_N"/>
    <property type="match status" value="1"/>
</dbReference>
<dbReference type="Pfam" id="PF13378">
    <property type="entry name" value="MR_MLE_C"/>
    <property type="match status" value="1"/>
</dbReference>
<dbReference type="SFLD" id="SFLDG00180">
    <property type="entry name" value="muconate_cycloisomerase"/>
    <property type="match status" value="1"/>
</dbReference>
<dbReference type="SFLD" id="SFLDF00009">
    <property type="entry name" value="o-succinylbenzoate_synthase"/>
    <property type="match status" value="1"/>
</dbReference>
<dbReference type="SMART" id="SM00922">
    <property type="entry name" value="MR_MLE"/>
    <property type="match status" value="1"/>
</dbReference>
<dbReference type="SUPFAM" id="SSF51604">
    <property type="entry name" value="Enolase C-terminal domain-like"/>
    <property type="match status" value="1"/>
</dbReference>
<dbReference type="SUPFAM" id="SSF54826">
    <property type="entry name" value="Enolase N-terminal domain-like"/>
    <property type="match status" value="1"/>
</dbReference>
<protein>
    <recommendedName>
        <fullName evidence="1">o-succinylbenzoate synthase</fullName>
        <shortName evidence="1">OSB synthase</shortName>
        <shortName evidence="1">OSBS</shortName>
        <ecNumber evidence="1">4.2.1.113</ecNumber>
    </recommendedName>
    <alternativeName>
        <fullName evidence="1">4-(2'-carboxyphenyl)-4-oxybutyric acid synthase</fullName>
    </alternativeName>
    <alternativeName>
        <fullName evidence="1">o-succinylbenzoic acid synthase</fullName>
    </alternativeName>
</protein>
<accession>B4SYX8</accession>
<organism>
    <name type="scientific">Salmonella newport (strain SL254)</name>
    <dbReference type="NCBI Taxonomy" id="423368"/>
    <lineage>
        <taxon>Bacteria</taxon>
        <taxon>Pseudomonadati</taxon>
        <taxon>Pseudomonadota</taxon>
        <taxon>Gammaproteobacteria</taxon>
        <taxon>Enterobacterales</taxon>
        <taxon>Enterobacteriaceae</taxon>
        <taxon>Salmonella</taxon>
    </lineage>
</organism>
<reference key="1">
    <citation type="journal article" date="2011" name="J. Bacteriol.">
        <title>Comparative genomics of 28 Salmonella enterica isolates: evidence for CRISPR-mediated adaptive sublineage evolution.</title>
        <authorList>
            <person name="Fricke W.F."/>
            <person name="Mammel M.K."/>
            <person name="McDermott P.F."/>
            <person name="Tartera C."/>
            <person name="White D.G."/>
            <person name="Leclerc J.E."/>
            <person name="Ravel J."/>
            <person name="Cebula T.A."/>
        </authorList>
    </citation>
    <scope>NUCLEOTIDE SEQUENCE [LARGE SCALE GENOMIC DNA]</scope>
    <source>
        <strain>SL254</strain>
    </source>
</reference>
<proteinExistence type="inferred from homology"/>
<feature type="chain" id="PRO_1000125583" description="o-succinylbenzoate synthase">
    <location>
        <begin position="1"/>
        <end position="320"/>
    </location>
</feature>
<feature type="active site" description="Proton donor" evidence="1">
    <location>
        <position position="133"/>
    </location>
</feature>
<feature type="active site" description="Proton acceptor" evidence="1">
    <location>
        <position position="235"/>
    </location>
</feature>
<feature type="binding site" evidence="1">
    <location>
        <position position="161"/>
    </location>
    <ligand>
        <name>Mg(2+)</name>
        <dbReference type="ChEBI" id="CHEBI:18420"/>
    </ligand>
</feature>
<feature type="binding site" evidence="1">
    <location>
        <position position="190"/>
    </location>
    <ligand>
        <name>Mg(2+)</name>
        <dbReference type="ChEBI" id="CHEBI:18420"/>
    </ligand>
</feature>
<feature type="binding site" evidence="1">
    <location>
        <position position="213"/>
    </location>
    <ligand>
        <name>Mg(2+)</name>
        <dbReference type="ChEBI" id="CHEBI:18420"/>
    </ligand>
</feature>
<gene>
    <name evidence="1" type="primary">menC</name>
    <name type="ordered locus">SNSL254_A2491</name>
</gene>